<gene>
    <name evidence="1" type="primary">rocA</name>
    <name type="ordered locus">SAB2428c</name>
</gene>
<name>ROCA_STAAB</name>
<dbReference type="EC" id="1.2.1.88" evidence="1"/>
<dbReference type="EMBL" id="AJ938182">
    <property type="protein sequence ID" value="CAI82116.1"/>
    <property type="molecule type" value="Genomic_DNA"/>
</dbReference>
<dbReference type="SMR" id="Q2YWA6"/>
<dbReference type="KEGG" id="sab:SAB2428c"/>
<dbReference type="HOGENOM" id="CLU_005391_0_0_9"/>
<dbReference type="UniPathway" id="UPA00261">
    <property type="reaction ID" value="UER00374"/>
</dbReference>
<dbReference type="GO" id="GO:0009898">
    <property type="term" value="C:cytoplasmic side of plasma membrane"/>
    <property type="evidence" value="ECO:0007669"/>
    <property type="project" value="TreeGrafter"/>
</dbReference>
<dbReference type="GO" id="GO:0003842">
    <property type="term" value="F:1-pyrroline-5-carboxylate dehydrogenase activity"/>
    <property type="evidence" value="ECO:0007669"/>
    <property type="project" value="UniProtKB-UniRule"/>
</dbReference>
<dbReference type="GO" id="GO:0006537">
    <property type="term" value="P:glutamate biosynthetic process"/>
    <property type="evidence" value="ECO:0007669"/>
    <property type="project" value="UniProtKB-UniRule"/>
</dbReference>
<dbReference type="GO" id="GO:0010133">
    <property type="term" value="P:proline catabolic process to glutamate"/>
    <property type="evidence" value="ECO:0007669"/>
    <property type="project" value="UniProtKB-UniPathway"/>
</dbReference>
<dbReference type="CDD" id="cd07124">
    <property type="entry name" value="ALDH_PutA-P5CDH-RocA"/>
    <property type="match status" value="1"/>
</dbReference>
<dbReference type="FunFam" id="3.40.309.10:FF:000005">
    <property type="entry name" value="1-pyrroline-5-carboxylate dehydrogenase 1"/>
    <property type="match status" value="1"/>
</dbReference>
<dbReference type="FunFam" id="3.40.605.10:FF:000045">
    <property type="entry name" value="1-pyrroline-5-carboxylate dehydrogenase 1"/>
    <property type="match status" value="1"/>
</dbReference>
<dbReference type="Gene3D" id="3.40.605.10">
    <property type="entry name" value="Aldehyde Dehydrogenase, Chain A, domain 1"/>
    <property type="match status" value="1"/>
</dbReference>
<dbReference type="Gene3D" id="3.40.309.10">
    <property type="entry name" value="Aldehyde Dehydrogenase, Chain A, domain 2"/>
    <property type="match status" value="1"/>
</dbReference>
<dbReference type="HAMAP" id="MF_00733">
    <property type="entry name" value="RocA"/>
    <property type="match status" value="1"/>
</dbReference>
<dbReference type="InterPro" id="IPR016161">
    <property type="entry name" value="Ald_DH/histidinol_DH"/>
</dbReference>
<dbReference type="InterPro" id="IPR016163">
    <property type="entry name" value="Ald_DH_C"/>
</dbReference>
<dbReference type="InterPro" id="IPR016160">
    <property type="entry name" value="Ald_DH_CS_CYS"/>
</dbReference>
<dbReference type="InterPro" id="IPR029510">
    <property type="entry name" value="Ald_DH_CS_GLU"/>
</dbReference>
<dbReference type="InterPro" id="IPR016162">
    <property type="entry name" value="Ald_DH_N"/>
</dbReference>
<dbReference type="InterPro" id="IPR015590">
    <property type="entry name" value="Aldehyde_DH_dom"/>
</dbReference>
<dbReference type="InterPro" id="IPR050485">
    <property type="entry name" value="Proline_metab_enzyme"/>
</dbReference>
<dbReference type="InterPro" id="IPR005932">
    <property type="entry name" value="RocA"/>
</dbReference>
<dbReference type="InterPro" id="IPR047597">
    <property type="entry name" value="RocA_bacillales"/>
</dbReference>
<dbReference type="NCBIfam" id="TIGR01237">
    <property type="entry name" value="D1pyr5carbox2"/>
    <property type="match status" value="1"/>
</dbReference>
<dbReference type="NCBIfam" id="NF002852">
    <property type="entry name" value="PRK03137.1"/>
    <property type="match status" value="1"/>
</dbReference>
<dbReference type="PANTHER" id="PTHR42862">
    <property type="entry name" value="DELTA-1-PYRROLINE-5-CARBOXYLATE DEHYDROGENASE 1, ISOFORM A-RELATED"/>
    <property type="match status" value="1"/>
</dbReference>
<dbReference type="PANTHER" id="PTHR42862:SF1">
    <property type="entry name" value="DELTA-1-PYRROLINE-5-CARBOXYLATE DEHYDROGENASE 2, ISOFORM A-RELATED"/>
    <property type="match status" value="1"/>
</dbReference>
<dbReference type="Pfam" id="PF00171">
    <property type="entry name" value="Aldedh"/>
    <property type="match status" value="1"/>
</dbReference>
<dbReference type="SUPFAM" id="SSF53720">
    <property type="entry name" value="ALDH-like"/>
    <property type="match status" value="1"/>
</dbReference>
<dbReference type="PROSITE" id="PS00070">
    <property type="entry name" value="ALDEHYDE_DEHYDR_CYS"/>
    <property type="match status" value="1"/>
</dbReference>
<dbReference type="PROSITE" id="PS00687">
    <property type="entry name" value="ALDEHYDE_DEHYDR_GLU"/>
    <property type="match status" value="1"/>
</dbReference>
<protein>
    <recommendedName>
        <fullName evidence="1">1-pyrroline-5-carboxylate dehydrogenase</fullName>
        <shortName evidence="1">P5C dehydrogenase</shortName>
        <ecNumber evidence="1">1.2.1.88</ecNumber>
    </recommendedName>
    <alternativeName>
        <fullName evidence="1">L-glutamate gamma-semialdehyde dehydrogenase</fullName>
    </alternativeName>
</protein>
<keyword id="KW-0520">NAD</keyword>
<keyword id="KW-0560">Oxidoreductase</keyword>
<proteinExistence type="inferred from homology"/>
<accession>Q2YWA6</accession>
<organism>
    <name type="scientific">Staphylococcus aureus (strain bovine RF122 / ET3-1)</name>
    <dbReference type="NCBI Taxonomy" id="273036"/>
    <lineage>
        <taxon>Bacteria</taxon>
        <taxon>Bacillati</taxon>
        <taxon>Bacillota</taxon>
        <taxon>Bacilli</taxon>
        <taxon>Bacillales</taxon>
        <taxon>Staphylococcaceae</taxon>
        <taxon>Staphylococcus</taxon>
    </lineage>
</organism>
<reference key="1">
    <citation type="journal article" date="2007" name="PLoS ONE">
        <title>Molecular correlates of host specialization in Staphylococcus aureus.</title>
        <authorList>
            <person name="Herron-Olson L."/>
            <person name="Fitzgerald J.R."/>
            <person name="Musser J.M."/>
            <person name="Kapur V."/>
        </authorList>
    </citation>
    <scope>NUCLEOTIDE SEQUENCE [LARGE SCALE GENOMIC DNA]</scope>
    <source>
        <strain>bovine RF122 / ET3-1</strain>
    </source>
</reference>
<comment type="catalytic activity">
    <reaction evidence="1">
        <text>L-glutamate 5-semialdehyde + NAD(+) + H2O = L-glutamate + NADH + 2 H(+)</text>
        <dbReference type="Rhea" id="RHEA:30235"/>
        <dbReference type="ChEBI" id="CHEBI:15377"/>
        <dbReference type="ChEBI" id="CHEBI:15378"/>
        <dbReference type="ChEBI" id="CHEBI:29985"/>
        <dbReference type="ChEBI" id="CHEBI:57540"/>
        <dbReference type="ChEBI" id="CHEBI:57945"/>
        <dbReference type="ChEBI" id="CHEBI:58066"/>
        <dbReference type="EC" id="1.2.1.88"/>
    </reaction>
</comment>
<comment type="pathway">
    <text evidence="1">Amino-acid degradation; L-proline degradation into L-glutamate; L-glutamate from L-proline: step 2/2.</text>
</comment>
<comment type="similarity">
    <text evidence="1">Belongs to the aldehyde dehydrogenase family. RocA subfamily.</text>
</comment>
<sequence length="514" mass="56868">MVVEFKNEPGYDFSVQENVDMFKKALKDVEKELGQDIPLVINGEKIFKDDKIKSINPADTSQVIANASKATKQDVEDAFKAANEAYKSWKTWSANDRAELMLRVSAIIRRRKAEIAAIMVYEAGKPWDEAVGDAAEGIDFIEYYARSMMDLAQGKPVLDREGEHNKYFYKSIGTGVTIPPWNFPFAIMAGTTLAPVVAGNTVLLKPAEDTPYIAYKLMEILEEAGLPKGVVNFVPGDPKEIGDYLVDHKDTHFVTFTGSRATGTRIYERSAVVQEGQNFLKRVIAEMGGKDAIVVDENIDTDMAAEAIVTSAFGFSGQKCSACSRAIVHKDVYDEVLEKSIKLTKELTLGNTVDNTYMGPVINKKQFDKIKNYIEIGKEEGKLEQGGGTDDSKGYFVEPTIISGLKSKDRIMQEEIFGPVVGFVKVNDFDEAIEVANDTDYGLTGAVITNNREHWIKAVNEFDVGNLYLNRGCTSAVVGYHPFGGFKMSGTDAKTGSPDYLLHFLEQKVVSEMF</sequence>
<evidence type="ECO:0000255" key="1">
    <source>
        <dbReference type="HAMAP-Rule" id="MF_00733"/>
    </source>
</evidence>
<feature type="chain" id="PRO_1000045975" description="1-pyrroline-5-carboxylate dehydrogenase">
    <location>
        <begin position="1"/>
        <end position="514"/>
    </location>
</feature>
<feature type="active site" evidence="1">
    <location>
        <position position="286"/>
    </location>
</feature>
<feature type="active site" evidence="1">
    <location>
        <position position="320"/>
    </location>
</feature>